<keyword id="KW-0963">Cytoplasm</keyword>
<keyword id="KW-0227">DNA damage</keyword>
<keyword id="KW-0234">DNA repair</keyword>
<keyword id="KW-0378">Hydrolase</keyword>
<accession>Q5HI95</accession>
<comment type="function">
    <text evidence="1">Excises uracil residues from the DNA which can arise as a result of misincorporation of dUMP residues by DNA polymerase or due to deamination of cytosine.</text>
</comment>
<comment type="catalytic activity">
    <reaction evidence="1">
        <text>Hydrolyzes single-stranded DNA or mismatched double-stranded DNA and polynucleotides, releasing free uracil.</text>
        <dbReference type="EC" id="3.2.2.27"/>
    </reaction>
</comment>
<comment type="subcellular location">
    <subcellularLocation>
        <location evidence="1">Cytoplasm</location>
    </subcellularLocation>
</comment>
<comment type="similarity">
    <text evidence="1">Belongs to the uracil-DNA glycosylase (UDG) superfamily. UNG family.</text>
</comment>
<organism>
    <name type="scientific">Staphylococcus aureus (strain COL)</name>
    <dbReference type="NCBI Taxonomy" id="93062"/>
    <lineage>
        <taxon>Bacteria</taxon>
        <taxon>Bacillati</taxon>
        <taxon>Bacillota</taxon>
        <taxon>Bacilli</taxon>
        <taxon>Bacillales</taxon>
        <taxon>Staphylococcaceae</taxon>
        <taxon>Staphylococcus</taxon>
    </lineage>
</organism>
<gene>
    <name evidence="1" type="primary">ung</name>
    <name type="ordered locus">SACOL0627</name>
</gene>
<dbReference type="EC" id="3.2.2.27" evidence="1"/>
<dbReference type="EMBL" id="CP000046">
    <property type="protein sequence ID" value="AAW37736.1"/>
    <property type="molecule type" value="Genomic_DNA"/>
</dbReference>
<dbReference type="RefSeq" id="WP_000455256.1">
    <property type="nucleotide sequence ID" value="NZ_JBGOFO010000005.1"/>
</dbReference>
<dbReference type="SMR" id="Q5HI95"/>
<dbReference type="KEGG" id="sac:SACOL0627"/>
<dbReference type="HOGENOM" id="CLU_032162_3_1_9"/>
<dbReference type="Proteomes" id="UP000000530">
    <property type="component" value="Chromosome"/>
</dbReference>
<dbReference type="GO" id="GO:0005737">
    <property type="term" value="C:cytoplasm"/>
    <property type="evidence" value="ECO:0007669"/>
    <property type="project" value="UniProtKB-SubCell"/>
</dbReference>
<dbReference type="GO" id="GO:0004844">
    <property type="term" value="F:uracil DNA N-glycosylase activity"/>
    <property type="evidence" value="ECO:0007669"/>
    <property type="project" value="UniProtKB-UniRule"/>
</dbReference>
<dbReference type="GO" id="GO:0097510">
    <property type="term" value="P:base-excision repair, AP site formation via deaminated base removal"/>
    <property type="evidence" value="ECO:0007669"/>
    <property type="project" value="TreeGrafter"/>
</dbReference>
<dbReference type="CDD" id="cd10027">
    <property type="entry name" value="UDG-F1-like"/>
    <property type="match status" value="1"/>
</dbReference>
<dbReference type="FunFam" id="3.40.470.10:FF:000001">
    <property type="entry name" value="Uracil-DNA glycosylase"/>
    <property type="match status" value="1"/>
</dbReference>
<dbReference type="Gene3D" id="3.40.470.10">
    <property type="entry name" value="Uracil-DNA glycosylase-like domain"/>
    <property type="match status" value="1"/>
</dbReference>
<dbReference type="HAMAP" id="MF_00148">
    <property type="entry name" value="UDG"/>
    <property type="match status" value="1"/>
</dbReference>
<dbReference type="InterPro" id="IPR002043">
    <property type="entry name" value="UDG_fam1"/>
</dbReference>
<dbReference type="InterPro" id="IPR018085">
    <property type="entry name" value="Ura-DNA_Glyclase_AS"/>
</dbReference>
<dbReference type="InterPro" id="IPR005122">
    <property type="entry name" value="Uracil-DNA_glycosylase-like"/>
</dbReference>
<dbReference type="InterPro" id="IPR036895">
    <property type="entry name" value="Uracil-DNA_glycosylase-like_sf"/>
</dbReference>
<dbReference type="NCBIfam" id="NF003588">
    <property type="entry name" value="PRK05254.1-1"/>
    <property type="match status" value="1"/>
</dbReference>
<dbReference type="NCBIfam" id="NF003589">
    <property type="entry name" value="PRK05254.1-2"/>
    <property type="match status" value="1"/>
</dbReference>
<dbReference type="NCBIfam" id="NF003591">
    <property type="entry name" value="PRK05254.1-4"/>
    <property type="match status" value="1"/>
</dbReference>
<dbReference type="NCBIfam" id="NF003592">
    <property type="entry name" value="PRK05254.1-5"/>
    <property type="match status" value="1"/>
</dbReference>
<dbReference type="NCBIfam" id="TIGR00628">
    <property type="entry name" value="ung"/>
    <property type="match status" value="1"/>
</dbReference>
<dbReference type="PANTHER" id="PTHR11264">
    <property type="entry name" value="URACIL-DNA GLYCOSYLASE"/>
    <property type="match status" value="1"/>
</dbReference>
<dbReference type="PANTHER" id="PTHR11264:SF0">
    <property type="entry name" value="URACIL-DNA GLYCOSYLASE"/>
    <property type="match status" value="1"/>
</dbReference>
<dbReference type="Pfam" id="PF03167">
    <property type="entry name" value="UDG"/>
    <property type="match status" value="1"/>
</dbReference>
<dbReference type="SMART" id="SM00986">
    <property type="entry name" value="UDG"/>
    <property type="match status" value="1"/>
</dbReference>
<dbReference type="SMART" id="SM00987">
    <property type="entry name" value="UreE_C"/>
    <property type="match status" value="1"/>
</dbReference>
<dbReference type="SUPFAM" id="SSF52141">
    <property type="entry name" value="Uracil-DNA glycosylase-like"/>
    <property type="match status" value="1"/>
</dbReference>
<dbReference type="PROSITE" id="PS00130">
    <property type="entry name" value="U_DNA_GLYCOSYLASE"/>
    <property type="match status" value="1"/>
</dbReference>
<reference key="1">
    <citation type="journal article" date="2005" name="J. Bacteriol.">
        <title>Insights on evolution of virulence and resistance from the complete genome analysis of an early methicillin-resistant Staphylococcus aureus strain and a biofilm-producing methicillin-resistant Staphylococcus epidermidis strain.</title>
        <authorList>
            <person name="Gill S.R."/>
            <person name="Fouts D.E."/>
            <person name="Archer G.L."/>
            <person name="Mongodin E.F."/>
            <person name="DeBoy R.T."/>
            <person name="Ravel J."/>
            <person name="Paulsen I.T."/>
            <person name="Kolonay J.F."/>
            <person name="Brinkac L.M."/>
            <person name="Beanan M.J."/>
            <person name="Dodson R.J."/>
            <person name="Daugherty S.C."/>
            <person name="Madupu R."/>
            <person name="Angiuoli S.V."/>
            <person name="Durkin A.S."/>
            <person name="Haft D.H."/>
            <person name="Vamathevan J.J."/>
            <person name="Khouri H."/>
            <person name="Utterback T.R."/>
            <person name="Lee C."/>
            <person name="Dimitrov G."/>
            <person name="Jiang L."/>
            <person name="Qin H."/>
            <person name="Weidman J."/>
            <person name="Tran K."/>
            <person name="Kang K.H."/>
            <person name="Hance I.R."/>
            <person name="Nelson K.E."/>
            <person name="Fraser C.M."/>
        </authorList>
    </citation>
    <scope>NUCLEOTIDE SEQUENCE [LARGE SCALE GENOMIC DNA]</scope>
    <source>
        <strain>COL</strain>
    </source>
</reference>
<sequence>MEWSQIFHDITTKHDFKAMHDFLEKEYSTAIVYPDRENIYQAFDLTPFENIKVVILGQDPYHGPNQAHGLAFSVQPNAKFPPSLRNMYKELADDIGCVRQTPHLQDWAREGVLLLNTVLTVRQGEANSHRDIGWETFTDEIIKAVSDYKEHVVFILWGKPAQQKIKLIDTSKHCIIKSVHPSPLSAYRGFFGSKPYSKANAYLESVGKSPINWCESEA</sequence>
<proteinExistence type="inferred from homology"/>
<evidence type="ECO:0000255" key="1">
    <source>
        <dbReference type="HAMAP-Rule" id="MF_00148"/>
    </source>
</evidence>
<protein>
    <recommendedName>
        <fullName evidence="1">Uracil-DNA glycosylase</fullName>
        <shortName evidence="1">UDG</shortName>
        <ecNumber evidence="1">3.2.2.27</ecNumber>
    </recommendedName>
</protein>
<name>UNG_STAAC</name>
<feature type="chain" id="PRO_0000176136" description="Uracil-DNA glycosylase">
    <location>
        <begin position="1"/>
        <end position="218"/>
    </location>
</feature>
<feature type="active site" description="Proton acceptor" evidence="1">
    <location>
        <position position="59"/>
    </location>
</feature>